<name>MRS23_ARATH</name>
<sequence>MRGARPDEFNFSTNPSTPNTGQPTPTYPAGVGGGGGGRKKGVGVRTWLVLNSSGQSEPKEEGKHSIMRRTGLPARDLRILDPLLSYPSTVLGRERAIVINLEHIKAIITAQEVLLLNSKDPSVSPFIDELQRRILCHHHATKPQEEQNSGGEPHTRVDPAQGEAGTEQSSGDQGSEAKKDAKQSLENQDGSKVLPFEFVALEACLEAASSSLEHEALRLELEAHPALDKLTSKISTLNLERVRQIKSRLVAITGRVQKVRDELEHLLDDDEDMAEMYLTEKLAQKLEDSSNSSMNESDTFEVDLPQGDEDDRLPPEFASEANRDGRYLQANDAHELLMSTQSALSRNSRGTHTSSTRSAMTNKLDVEELEMLLEAYFVQIDGILNKLSTLREYVDDTEDYINIMLDDKQNHLLQMGVMLTTATLVMSAFIAVAGVFGMNITIELFTDNKHGPSRFIWTVIGGSIGSICLYVGAIGWCKYKRLLE</sequence>
<dbReference type="EMBL" id="AY150288">
    <property type="protein sequence ID" value="AAN73213.1"/>
    <property type="molecule type" value="mRNA"/>
</dbReference>
<dbReference type="EMBL" id="AP000417">
    <property type="protein sequence ID" value="BAB02549.1"/>
    <property type="molecule type" value="Genomic_DNA"/>
</dbReference>
<dbReference type="EMBL" id="CP002686">
    <property type="protein sequence ID" value="AEE76270.1"/>
    <property type="molecule type" value="Genomic_DNA"/>
</dbReference>
<dbReference type="EMBL" id="BT000458">
    <property type="protein sequence ID" value="AAN17435.1"/>
    <property type="molecule type" value="mRNA"/>
</dbReference>
<dbReference type="EMBL" id="BT006622">
    <property type="protein sequence ID" value="AAP31966.1"/>
    <property type="molecule type" value="mRNA"/>
</dbReference>
<dbReference type="PIR" id="T52392">
    <property type="entry name" value="T52392"/>
</dbReference>
<dbReference type="RefSeq" id="NP_188598.2">
    <property type="nucleotide sequence ID" value="NM_112854.4"/>
</dbReference>
<dbReference type="SMR" id="Q9LJN2"/>
<dbReference type="BioGRID" id="6834">
    <property type="interactions" value="2"/>
</dbReference>
<dbReference type="FunCoup" id="Q9LJN2">
    <property type="interactions" value="1801"/>
</dbReference>
<dbReference type="IntAct" id="Q9LJN2">
    <property type="interactions" value="1"/>
</dbReference>
<dbReference type="STRING" id="3702.Q9LJN2"/>
<dbReference type="PaxDb" id="3702-AT3G19640.1"/>
<dbReference type="ProteomicsDB" id="238910"/>
<dbReference type="EnsemblPlants" id="AT3G19640.1">
    <property type="protein sequence ID" value="AT3G19640.1"/>
    <property type="gene ID" value="AT3G19640"/>
</dbReference>
<dbReference type="GeneID" id="821501"/>
<dbReference type="Gramene" id="AT3G19640.1">
    <property type="protein sequence ID" value="AT3G19640.1"/>
    <property type="gene ID" value="AT3G19640"/>
</dbReference>
<dbReference type="KEGG" id="ath:AT3G19640"/>
<dbReference type="Araport" id="AT3G19640"/>
<dbReference type="TAIR" id="AT3G19640">
    <property type="gene designation" value="MGT4"/>
</dbReference>
<dbReference type="eggNOG" id="KOG2662">
    <property type="taxonomic scope" value="Eukaryota"/>
</dbReference>
<dbReference type="HOGENOM" id="CLU_034694_0_0_1"/>
<dbReference type="InParanoid" id="Q9LJN2"/>
<dbReference type="OMA" id="WTNLYDL"/>
<dbReference type="OrthoDB" id="10251508at2759"/>
<dbReference type="PhylomeDB" id="Q9LJN2"/>
<dbReference type="PRO" id="PR:Q9LJN2"/>
<dbReference type="Proteomes" id="UP000006548">
    <property type="component" value="Chromosome 3"/>
</dbReference>
<dbReference type="ExpressionAtlas" id="Q9LJN2">
    <property type="expression patterns" value="baseline and differential"/>
</dbReference>
<dbReference type="GO" id="GO:0016020">
    <property type="term" value="C:membrane"/>
    <property type="evidence" value="ECO:0007669"/>
    <property type="project" value="UniProtKB-SubCell"/>
</dbReference>
<dbReference type="GO" id="GO:0015095">
    <property type="term" value="F:magnesium ion transmembrane transporter activity"/>
    <property type="evidence" value="ECO:0000314"/>
    <property type="project" value="TAIR"/>
</dbReference>
<dbReference type="CDD" id="cd12823">
    <property type="entry name" value="Mrs2_Mfm1p-like"/>
    <property type="match status" value="1"/>
</dbReference>
<dbReference type="FunFam" id="2.40.128.330:FF:000001">
    <property type="entry name" value="Magnesium transporter MRS2-1"/>
    <property type="match status" value="1"/>
</dbReference>
<dbReference type="Gene3D" id="2.40.128.330">
    <property type="match status" value="1"/>
</dbReference>
<dbReference type="Gene3D" id="1.20.58.340">
    <property type="entry name" value="Magnesium transport protein CorA, transmembrane region"/>
    <property type="match status" value="1"/>
</dbReference>
<dbReference type="InterPro" id="IPR039204">
    <property type="entry name" value="MRS2-like"/>
</dbReference>
<dbReference type="PANTHER" id="PTHR13890:SF35">
    <property type="entry name" value="MAGNESIUM TRANSPORTER MRS2-3"/>
    <property type="match status" value="1"/>
</dbReference>
<dbReference type="PANTHER" id="PTHR13890">
    <property type="entry name" value="RNA SPLICING PROTEIN MRS2, MITOCHONDRIAL"/>
    <property type="match status" value="1"/>
</dbReference>
<dbReference type="Pfam" id="PF22099">
    <property type="entry name" value="MRS2-like"/>
    <property type="match status" value="3"/>
</dbReference>
<organism>
    <name type="scientific">Arabidopsis thaliana</name>
    <name type="common">Mouse-ear cress</name>
    <dbReference type="NCBI Taxonomy" id="3702"/>
    <lineage>
        <taxon>Eukaryota</taxon>
        <taxon>Viridiplantae</taxon>
        <taxon>Streptophyta</taxon>
        <taxon>Embryophyta</taxon>
        <taxon>Tracheophyta</taxon>
        <taxon>Spermatophyta</taxon>
        <taxon>Magnoliopsida</taxon>
        <taxon>eudicotyledons</taxon>
        <taxon>Gunneridae</taxon>
        <taxon>Pentapetalae</taxon>
        <taxon>rosids</taxon>
        <taxon>malvids</taxon>
        <taxon>Brassicales</taxon>
        <taxon>Brassicaceae</taxon>
        <taxon>Camelineae</taxon>
        <taxon>Arabidopsis</taxon>
    </lineage>
</organism>
<comment type="function">
    <text evidence="1">Magnesium transporter that may mediate the influx of magnesium.</text>
</comment>
<comment type="subcellular location">
    <subcellularLocation>
        <location evidence="6">Membrane</location>
        <topology evidence="6">Multi-pass membrane protein</topology>
    </subcellularLocation>
</comment>
<comment type="tissue specificity">
    <text evidence="4 5">Expressed in the whole plant.</text>
</comment>
<comment type="miscellaneous">
    <text>Has the ability to complement a mutant in yeast lacking magnesium transport capability.</text>
</comment>
<comment type="similarity">
    <text evidence="6">Belongs to the CorA metal ion transporter (MIT) (TC 1.A.35.5) family.</text>
</comment>
<protein>
    <recommendedName>
        <fullName>Magnesium transporter MRS2-3</fullName>
    </recommendedName>
    <alternativeName>
        <fullName>Magnesium Transporter 4</fullName>
        <shortName>AtMGT4</shortName>
    </alternativeName>
</protein>
<feature type="chain" id="PRO_0000394167" description="Magnesium transporter MRS2-3">
    <location>
        <begin position="1"/>
        <end position="484"/>
    </location>
</feature>
<feature type="transmembrane region" description="Helical" evidence="2">
    <location>
        <begin position="416"/>
        <end position="436"/>
    </location>
</feature>
<feature type="transmembrane region" description="Helical" evidence="2">
    <location>
        <begin position="455"/>
        <end position="475"/>
    </location>
</feature>
<feature type="region of interest" description="Disordered" evidence="3">
    <location>
        <begin position="1"/>
        <end position="40"/>
    </location>
</feature>
<feature type="region of interest" description="Disordered" evidence="3">
    <location>
        <begin position="141"/>
        <end position="186"/>
    </location>
</feature>
<feature type="region of interest" description="Disordered" evidence="3">
    <location>
        <begin position="286"/>
        <end position="320"/>
    </location>
</feature>
<feature type="coiled-coil region" evidence="2">
    <location>
        <begin position="203"/>
        <end position="275"/>
    </location>
</feature>
<feature type="short sequence motif" description="Required for magnesium transport activity">
    <location>
        <begin position="437"/>
        <end position="439"/>
    </location>
</feature>
<feature type="compositionally biased region" description="Polar residues" evidence="3">
    <location>
        <begin position="10"/>
        <end position="24"/>
    </location>
</feature>
<feature type="compositionally biased region" description="Acidic residues" evidence="3">
    <location>
        <begin position="298"/>
        <end position="311"/>
    </location>
</feature>
<evidence type="ECO:0000250" key="1"/>
<evidence type="ECO:0000255" key="2"/>
<evidence type="ECO:0000256" key="3">
    <source>
        <dbReference type="SAM" id="MobiDB-lite"/>
    </source>
</evidence>
<evidence type="ECO:0000269" key="4">
    <source>
    </source>
</evidence>
<evidence type="ECO:0000269" key="5">
    <source>
    </source>
</evidence>
<evidence type="ECO:0000305" key="6"/>
<keyword id="KW-0175">Coiled coil</keyword>
<keyword id="KW-0406">Ion transport</keyword>
<keyword id="KW-0460">Magnesium</keyword>
<keyword id="KW-0472">Membrane</keyword>
<keyword id="KW-1185">Reference proteome</keyword>
<keyword id="KW-0812">Transmembrane</keyword>
<keyword id="KW-1133">Transmembrane helix</keyword>
<keyword id="KW-0813">Transport</keyword>
<accession>Q9LJN2</accession>
<proteinExistence type="evidence at transcript level"/>
<gene>
    <name type="primary">MRS2-3</name>
    <name type="synonym">MGT4</name>
    <name type="ordered locus">At3g19640</name>
    <name type="ORF">MMB12.11</name>
</gene>
<reference key="1">
    <citation type="journal article" date="2001" name="Plant Cell">
        <title>A novel family of magnesium transport genes in Arabidopsis.</title>
        <authorList>
            <person name="Li L."/>
            <person name="Tutone A.F."/>
            <person name="Drummond R.S."/>
            <person name="Gardner R.C."/>
            <person name="Luan S."/>
        </authorList>
    </citation>
    <scope>NUCLEOTIDE SEQUENCE [MRNA]</scope>
    <scope>GENE FAMILY</scope>
    <scope>TISSUE SPECIFICITY</scope>
    <source>
        <strain>cv. Landsberg erecta</strain>
    </source>
</reference>
<reference key="2">
    <citation type="journal article" date="2000" name="DNA Res.">
        <title>Structural analysis of Arabidopsis thaliana chromosome 3. II. Sequence features of the 4,251,695 bp regions covered by 90 P1, TAC and BAC clones.</title>
        <authorList>
            <person name="Kaneko T."/>
            <person name="Katoh T."/>
            <person name="Sato S."/>
            <person name="Nakamura Y."/>
            <person name="Asamizu E."/>
            <person name="Tabata S."/>
        </authorList>
    </citation>
    <scope>NUCLEOTIDE SEQUENCE [LARGE SCALE GENOMIC DNA]</scope>
    <source>
        <strain>cv. Columbia</strain>
    </source>
</reference>
<reference key="3">
    <citation type="journal article" date="2017" name="Plant J.">
        <title>Araport11: a complete reannotation of the Arabidopsis thaliana reference genome.</title>
        <authorList>
            <person name="Cheng C.Y."/>
            <person name="Krishnakumar V."/>
            <person name="Chan A.P."/>
            <person name="Thibaud-Nissen F."/>
            <person name="Schobel S."/>
            <person name="Town C.D."/>
        </authorList>
    </citation>
    <scope>GENOME REANNOTATION</scope>
    <source>
        <strain>cv. Columbia</strain>
    </source>
</reference>
<reference key="4">
    <citation type="journal article" date="2003" name="Science">
        <title>Empirical analysis of transcriptional activity in the Arabidopsis genome.</title>
        <authorList>
            <person name="Yamada K."/>
            <person name="Lim J."/>
            <person name="Dale J.M."/>
            <person name="Chen H."/>
            <person name="Shinn P."/>
            <person name="Palm C.J."/>
            <person name="Southwick A.M."/>
            <person name="Wu H.C."/>
            <person name="Kim C.J."/>
            <person name="Nguyen M."/>
            <person name="Pham P.K."/>
            <person name="Cheuk R.F."/>
            <person name="Karlin-Newmann G."/>
            <person name="Liu S.X."/>
            <person name="Lam B."/>
            <person name="Sakano H."/>
            <person name="Wu T."/>
            <person name="Yu G."/>
            <person name="Miranda M."/>
            <person name="Quach H.L."/>
            <person name="Tripp M."/>
            <person name="Chang C.H."/>
            <person name="Lee J.M."/>
            <person name="Toriumi M.J."/>
            <person name="Chan M.M."/>
            <person name="Tang C.C."/>
            <person name="Onodera C.S."/>
            <person name="Deng J.M."/>
            <person name="Akiyama K."/>
            <person name="Ansari Y."/>
            <person name="Arakawa T."/>
            <person name="Banh J."/>
            <person name="Banno F."/>
            <person name="Bowser L."/>
            <person name="Brooks S.Y."/>
            <person name="Carninci P."/>
            <person name="Chao Q."/>
            <person name="Choy N."/>
            <person name="Enju A."/>
            <person name="Goldsmith A.D."/>
            <person name="Gurjal M."/>
            <person name="Hansen N.F."/>
            <person name="Hayashizaki Y."/>
            <person name="Johnson-Hopson C."/>
            <person name="Hsuan V.W."/>
            <person name="Iida K."/>
            <person name="Karnes M."/>
            <person name="Khan S."/>
            <person name="Koesema E."/>
            <person name="Ishida J."/>
            <person name="Jiang P.X."/>
            <person name="Jones T."/>
            <person name="Kawai J."/>
            <person name="Kamiya A."/>
            <person name="Meyers C."/>
            <person name="Nakajima M."/>
            <person name="Narusaka M."/>
            <person name="Seki M."/>
            <person name="Sakurai T."/>
            <person name="Satou M."/>
            <person name="Tamse R."/>
            <person name="Vaysberg M."/>
            <person name="Wallender E.K."/>
            <person name="Wong C."/>
            <person name="Yamamura Y."/>
            <person name="Yuan S."/>
            <person name="Shinozaki K."/>
            <person name="Davis R.W."/>
            <person name="Theologis A."/>
            <person name="Ecker J.R."/>
        </authorList>
    </citation>
    <scope>NUCLEOTIDE SEQUENCE [LARGE SCALE MRNA]</scope>
    <source>
        <strain>cv. Columbia</strain>
    </source>
</reference>
<reference key="5">
    <citation type="journal article" date="2009" name="Plant Cell">
        <title>A root-expressed magnesium transporter of the MRS2/MGT gene family in Arabidopsis thaliana allows for growth in low-Mg2+ environments.</title>
        <authorList>
            <person name="Gebert M."/>
            <person name="Meschenmoser K."/>
            <person name="Svidova S."/>
            <person name="Weghuber J."/>
            <person name="Schweyen R."/>
            <person name="Eifler K."/>
            <person name="Lenz H."/>
            <person name="Weyand K."/>
            <person name="Knoop V."/>
        </authorList>
    </citation>
    <scope>GENE FAMILY</scope>
    <scope>NOMENCLATURE</scope>
    <scope>TISSUE SPECIFICITY</scope>
</reference>